<comment type="function">
    <text evidence="3 6">Coreceptor for GDNF, a neurotrophic factor that enhances survival and morphological differentiation of dopaminergic neurons and increases their high-affinity dopamine uptake (PubMed:10829012, PubMed:31535977). GDNF-binding leads to autophosphorylation and activation of the RET receptor (PubMed:31535977).</text>
</comment>
<comment type="subunit">
    <text evidence="5 6">Interacts with GDNF ligand and RET: forms a 2:2:2 ternary complex composed of GDNF ligand, GFRA1 and RET receptor (PubMed:23333276, PubMed:31535977). Interacts with SORL1, either alone or in complex with GDNF (PubMed:23333276). Interaction between SORL1 and GFRA1 leads to GFRA1 internalization, but not degradation (PubMed:23333276).</text>
</comment>
<comment type="interaction">
    <interactant intactId="EBI-15854635">
        <id>P56159-2</id>
    </interactant>
    <interactant intactId="EBI-1171329">
        <id>Q92673</id>
        <label>SORL1</label>
    </interactant>
    <organismsDiffer>false</organismsDiffer>
    <experiments>3</experiments>
</comment>
<comment type="subcellular location">
    <subcellularLocation>
        <location evidence="1">Cell membrane</location>
        <topology evidence="1">Lipid-anchor</topology>
        <topology evidence="1">GPI-anchor</topology>
    </subcellularLocation>
    <subcellularLocation>
        <location evidence="1">Golgi apparatus</location>
        <location evidence="1">trans-Golgi network</location>
    </subcellularLocation>
    <subcellularLocation>
        <location evidence="1">Endosome</location>
    </subcellularLocation>
    <subcellularLocation>
        <location evidence="1">Endosome</location>
        <location evidence="1">Multivesicular body</location>
    </subcellularLocation>
    <text evidence="1">Localizes mainly to the plasma membrane. In the presence of SORL1, shifts to vesicular structures, including trans-Golgi network, endosomes and multivesicular bodies.</text>
</comment>
<comment type="alternative products">
    <event type="alternative splicing"/>
    <isoform>
        <id>P56159-1</id>
        <name>1</name>
        <sequence type="displayed"/>
    </isoform>
    <isoform>
        <id>P56159-2</id>
        <name>2</name>
        <sequence type="described" ref="VSP_001660"/>
    </isoform>
</comment>
<comment type="disease" evidence="7 8">
    <disease id="DI-06433">
        <name>Renal hypodysplasia/aplasia 4</name>
        <acronym>RHDA4</acronym>
        <description>An autosomal recessive, severe congenital anomaly of the kidney and urinary tract characterized by bilateral renal agenesis, and severely reduced or absent amniotic fluid during pregnancy. Patients exhibit the Potter sequence, including flattened nose, ear anomalies, and receding chin. Some affected individuals have limb contractures and joint dislocations. Bilateral renal agenesis is almost invariably fatal in utero or in the perinatal period.</description>
        <dbReference type="MIM" id="619887"/>
    </disease>
    <text>The disease is caused by variants affecting the gene represented in this entry.</text>
</comment>
<comment type="miscellaneous">
    <molecule>Isoform 2</molecule>
    <text evidence="14">May be produced at very low levels due to a premature stop codon in the mRNA, leading to nonsense-mediated mRNA decay.</text>
</comment>
<comment type="similarity">
    <text evidence="14">Belongs to the GDNFR family.</text>
</comment>
<dbReference type="EMBL" id="U97144">
    <property type="protein sequence ID" value="AAC51646.1"/>
    <property type="molecule type" value="mRNA"/>
</dbReference>
<dbReference type="EMBL" id="AF038420">
    <property type="protein sequence ID" value="AAC39693.1"/>
    <property type="molecule type" value="Genomic_DNA"/>
</dbReference>
<dbReference type="EMBL" id="AF038411">
    <property type="protein sequence ID" value="AAC39693.1"/>
    <property type="status" value="JOINED"/>
    <property type="molecule type" value="Genomic_DNA"/>
</dbReference>
<dbReference type="EMBL" id="AF038412">
    <property type="protein sequence ID" value="AAC39693.1"/>
    <property type="status" value="JOINED"/>
    <property type="molecule type" value="Genomic_DNA"/>
</dbReference>
<dbReference type="EMBL" id="AF038413">
    <property type="protein sequence ID" value="AAC39693.1"/>
    <property type="status" value="JOINED"/>
    <property type="molecule type" value="Genomic_DNA"/>
</dbReference>
<dbReference type="EMBL" id="AF038414">
    <property type="protein sequence ID" value="AAC39693.1"/>
    <property type="status" value="JOINED"/>
    <property type="molecule type" value="Genomic_DNA"/>
</dbReference>
<dbReference type="EMBL" id="AF038415">
    <property type="protein sequence ID" value="AAC39693.1"/>
    <property type="status" value="JOINED"/>
    <property type="molecule type" value="Genomic_DNA"/>
</dbReference>
<dbReference type="EMBL" id="AF038416">
    <property type="protein sequence ID" value="AAC39693.1"/>
    <property type="status" value="JOINED"/>
    <property type="molecule type" value="Genomic_DNA"/>
</dbReference>
<dbReference type="EMBL" id="AF038417">
    <property type="protein sequence ID" value="AAC39693.1"/>
    <property type="status" value="JOINED"/>
    <property type="molecule type" value="Genomic_DNA"/>
</dbReference>
<dbReference type="EMBL" id="AF038418">
    <property type="protein sequence ID" value="AAC39693.1"/>
    <property type="status" value="JOINED"/>
    <property type="molecule type" value="Genomic_DNA"/>
</dbReference>
<dbReference type="EMBL" id="AF038419">
    <property type="protein sequence ID" value="AAC39693.1"/>
    <property type="status" value="JOINED"/>
    <property type="molecule type" value="Genomic_DNA"/>
</dbReference>
<dbReference type="EMBL" id="AF038421">
    <property type="protein sequence ID" value="AAC39692.1"/>
    <property type="molecule type" value="mRNA"/>
</dbReference>
<dbReference type="EMBL" id="AF042080">
    <property type="protein sequence ID" value="AAB97371.1"/>
    <property type="molecule type" value="mRNA"/>
</dbReference>
<dbReference type="EMBL" id="AF058999">
    <property type="protein sequence ID" value="AAC14431.1"/>
    <property type="molecule type" value="Genomic_DNA"/>
</dbReference>
<dbReference type="EMBL" id="AF058990">
    <property type="protein sequence ID" value="AAC14431.1"/>
    <property type="status" value="JOINED"/>
    <property type="molecule type" value="Genomic_DNA"/>
</dbReference>
<dbReference type="EMBL" id="AF058991">
    <property type="protein sequence ID" value="AAC14431.1"/>
    <property type="status" value="JOINED"/>
    <property type="molecule type" value="Genomic_DNA"/>
</dbReference>
<dbReference type="EMBL" id="AF058992">
    <property type="protein sequence ID" value="AAC14431.1"/>
    <property type="status" value="JOINED"/>
    <property type="molecule type" value="Genomic_DNA"/>
</dbReference>
<dbReference type="EMBL" id="AF058993">
    <property type="protein sequence ID" value="AAC14431.1"/>
    <property type="status" value="JOINED"/>
    <property type="molecule type" value="Genomic_DNA"/>
</dbReference>
<dbReference type="EMBL" id="AF058994">
    <property type="protein sequence ID" value="AAC14431.1"/>
    <property type="status" value="JOINED"/>
    <property type="molecule type" value="Genomic_DNA"/>
</dbReference>
<dbReference type="EMBL" id="AF058995">
    <property type="protein sequence ID" value="AAC14431.1"/>
    <property type="status" value="JOINED"/>
    <property type="molecule type" value="Genomic_DNA"/>
</dbReference>
<dbReference type="EMBL" id="AF058996">
    <property type="protein sequence ID" value="AAC14431.1"/>
    <property type="status" value="JOINED"/>
    <property type="molecule type" value="Genomic_DNA"/>
</dbReference>
<dbReference type="EMBL" id="AF058997">
    <property type="protein sequence ID" value="AAC14431.1"/>
    <property type="status" value="JOINED"/>
    <property type="molecule type" value="Genomic_DNA"/>
</dbReference>
<dbReference type="EMBL" id="AF058998">
    <property type="protein sequence ID" value="AAC14431.1"/>
    <property type="status" value="JOINED"/>
    <property type="molecule type" value="Genomic_DNA"/>
</dbReference>
<dbReference type="EMBL" id="U95847">
    <property type="protein sequence ID" value="AAB71811.1"/>
    <property type="molecule type" value="mRNA"/>
</dbReference>
<dbReference type="EMBL" id="AK292886">
    <property type="protein sequence ID" value="BAF85575.1"/>
    <property type="molecule type" value="mRNA"/>
</dbReference>
<dbReference type="EMBL" id="CH471066">
    <property type="protein sequence ID" value="EAW49458.1"/>
    <property type="molecule type" value="Genomic_DNA"/>
</dbReference>
<dbReference type="EMBL" id="BC014962">
    <property type="protein sequence ID" value="AAH14962.1"/>
    <property type="molecule type" value="mRNA"/>
</dbReference>
<dbReference type="CCDS" id="CCDS44481.1">
    <molecule id="P56159-1"/>
</dbReference>
<dbReference type="CCDS" id="CCDS7593.1">
    <molecule id="P56159-2"/>
</dbReference>
<dbReference type="RefSeq" id="NP_001138925.1">
    <molecule id="P56159-2"/>
    <property type="nucleotide sequence ID" value="NM_001145453.4"/>
</dbReference>
<dbReference type="RefSeq" id="NP_001335025.1">
    <molecule id="P56159-2"/>
    <property type="nucleotide sequence ID" value="NM_001348096.3"/>
</dbReference>
<dbReference type="RefSeq" id="NP_001335026.1">
    <property type="nucleotide sequence ID" value="NM_001348097.1"/>
</dbReference>
<dbReference type="RefSeq" id="NP_001335027.1">
    <molecule id="P56159-1"/>
    <property type="nucleotide sequence ID" value="NM_001348098.4"/>
</dbReference>
<dbReference type="RefSeq" id="NP_001369485.1">
    <molecule id="P56159-2"/>
    <property type="nucleotide sequence ID" value="NM_001382556.2"/>
</dbReference>
<dbReference type="RefSeq" id="NP_001369486.1">
    <molecule id="P56159-2"/>
    <property type="nucleotide sequence ID" value="NM_001382557.2"/>
</dbReference>
<dbReference type="RefSeq" id="NP_001369487.1">
    <molecule id="P56159-2"/>
    <property type="nucleotide sequence ID" value="NM_001382558.2"/>
</dbReference>
<dbReference type="RefSeq" id="NP_001369488.1">
    <molecule id="P56159-2"/>
    <property type="nucleotide sequence ID" value="NM_001382559.2"/>
</dbReference>
<dbReference type="RefSeq" id="NP_005255.1">
    <molecule id="P56159-1"/>
    <property type="nucleotide sequence ID" value="NM_005264.8"/>
</dbReference>
<dbReference type="RefSeq" id="NP_665736.1">
    <molecule id="P56159-2"/>
    <property type="nucleotide sequence ID" value="NM_145793.7"/>
</dbReference>
<dbReference type="RefSeq" id="XP_011537936.1">
    <property type="nucleotide sequence ID" value="XM_011539634.1"/>
</dbReference>
<dbReference type="PDB" id="6Q2N">
    <property type="method" value="EM"/>
    <property type="resolution" value="4.40 A"/>
    <property type="chains" value="C/D=25-426"/>
</dbReference>
<dbReference type="PDBsum" id="6Q2N"/>
<dbReference type="EMDB" id="EMD-20575"/>
<dbReference type="SMR" id="P56159"/>
<dbReference type="BioGRID" id="108942">
    <property type="interactions" value="46"/>
</dbReference>
<dbReference type="CORUM" id="P56159"/>
<dbReference type="DIP" id="DIP-59052N"/>
<dbReference type="FunCoup" id="P56159">
    <property type="interactions" value="38"/>
</dbReference>
<dbReference type="IntAct" id="P56159">
    <property type="interactions" value="6"/>
</dbReference>
<dbReference type="STRING" id="9606.ENSP00000347591"/>
<dbReference type="ChEMBL" id="CHEMBL3833481"/>
<dbReference type="GuidetoPHARMACOLOGY" id="1743"/>
<dbReference type="GlyConnect" id="1265">
    <property type="glycosylation" value="9 N-Linked glycans (1 site)"/>
</dbReference>
<dbReference type="GlyCosmos" id="P56159">
    <property type="glycosylation" value="3 sites, 8 glycans"/>
</dbReference>
<dbReference type="GlyGen" id="P56159">
    <property type="glycosylation" value="6 sites, 12 N-linked glycans (2 sites), 2 O-linked glycans (3 sites)"/>
</dbReference>
<dbReference type="iPTMnet" id="P56159"/>
<dbReference type="PhosphoSitePlus" id="P56159"/>
<dbReference type="SwissPalm" id="P56159"/>
<dbReference type="BioMuta" id="GFRA1"/>
<dbReference type="DMDM" id="20141405"/>
<dbReference type="jPOST" id="P56159"/>
<dbReference type="MassIVE" id="P56159"/>
<dbReference type="PaxDb" id="9606-ENSP00000347591"/>
<dbReference type="PeptideAtlas" id="P56159"/>
<dbReference type="ProteomicsDB" id="56888">
    <molecule id="P56159-1"/>
</dbReference>
<dbReference type="ProteomicsDB" id="56889">
    <molecule id="P56159-2"/>
</dbReference>
<dbReference type="Antibodypedia" id="18697">
    <property type="antibodies" value="457 antibodies from 39 providers"/>
</dbReference>
<dbReference type="DNASU" id="2674"/>
<dbReference type="Ensembl" id="ENST00000355422.11">
    <molecule id="P56159-1"/>
    <property type="protein sequence ID" value="ENSP00000347591.6"/>
    <property type="gene ID" value="ENSG00000151892.16"/>
</dbReference>
<dbReference type="Ensembl" id="ENST00000369234.5">
    <molecule id="P56159-1"/>
    <property type="protein sequence ID" value="ENSP00000358237.4"/>
    <property type="gene ID" value="ENSG00000151892.16"/>
</dbReference>
<dbReference type="Ensembl" id="ENST00000369236.5">
    <molecule id="P56159-2"/>
    <property type="protein sequence ID" value="ENSP00000358239.1"/>
    <property type="gene ID" value="ENSG00000151892.16"/>
</dbReference>
<dbReference type="Ensembl" id="ENST00000439649.8">
    <molecule id="P56159-2"/>
    <property type="protein sequence ID" value="ENSP00000393725.3"/>
    <property type="gene ID" value="ENSG00000151892.16"/>
</dbReference>
<dbReference type="Ensembl" id="ENST00000682743.1">
    <molecule id="P56159-2"/>
    <property type="protein sequence ID" value="ENSP00000507970.1"/>
    <property type="gene ID" value="ENSG00000151892.16"/>
</dbReference>
<dbReference type="Ensembl" id="ENST00000684105.1">
    <molecule id="P56159-2"/>
    <property type="protein sequence ID" value="ENSP00000506818.1"/>
    <property type="gene ID" value="ENSG00000151892.16"/>
</dbReference>
<dbReference type="GeneID" id="2674"/>
<dbReference type="KEGG" id="hsa:2674"/>
<dbReference type="MANE-Select" id="ENST00000355422.11">
    <property type="protein sequence ID" value="ENSP00000347591.6"/>
    <property type="RefSeq nucleotide sequence ID" value="NM_005264.8"/>
    <property type="RefSeq protein sequence ID" value="NP_005255.1"/>
</dbReference>
<dbReference type="UCSC" id="uc001lci.4">
    <molecule id="P56159-1"/>
    <property type="organism name" value="human"/>
</dbReference>
<dbReference type="AGR" id="HGNC:4243"/>
<dbReference type="CTD" id="2674"/>
<dbReference type="DisGeNET" id="2674"/>
<dbReference type="GeneCards" id="GFRA1"/>
<dbReference type="HGNC" id="HGNC:4243">
    <property type="gene designation" value="GFRA1"/>
</dbReference>
<dbReference type="HPA" id="ENSG00000151892">
    <property type="expression patterns" value="Low tissue specificity"/>
</dbReference>
<dbReference type="MalaCards" id="GFRA1"/>
<dbReference type="MIM" id="601496">
    <property type="type" value="gene"/>
</dbReference>
<dbReference type="MIM" id="619887">
    <property type="type" value="phenotype"/>
</dbReference>
<dbReference type="neXtProt" id="NX_P56159"/>
<dbReference type="OpenTargets" id="ENSG00000151892"/>
<dbReference type="Orphanet" id="1848">
    <property type="disease" value="Renal agenesis, bilateral"/>
</dbReference>
<dbReference type="PharmGKB" id="PA28653"/>
<dbReference type="VEuPathDB" id="HostDB:ENSG00000151892"/>
<dbReference type="eggNOG" id="ENOG502QQA2">
    <property type="taxonomic scope" value="Eukaryota"/>
</dbReference>
<dbReference type="GeneTree" id="ENSGT00940000155560"/>
<dbReference type="HOGENOM" id="CLU_040179_1_1_1"/>
<dbReference type="InParanoid" id="P56159"/>
<dbReference type="OMA" id="CKKFLNF"/>
<dbReference type="OrthoDB" id="9435188at2759"/>
<dbReference type="PAN-GO" id="P56159">
    <property type="GO annotations" value="4 GO annotations based on evolutionary models"/>
</dbReference>
<dbReference type="PhylomeDB" id="P56159"/>
<dbReference type="TreeFam" id="TF331647"/>
<dbReference type="PathwayCommons" id="P56159"/>
<dbReference type="Reactome" id="R-HSA-419037">
    <property type="pathway name" value="NCAM1 interactions"/>
</dbReference>
<dbReference type="Reactome" id="R-HSA-5673001">
    <property type="pathway name" value="RAF/MAP kinase cascade"/>
</dbReference>
<dbReference type="Reactome" id="R-HSA-8853659">
    <property type="pathway name" value="RET signaling"/>
</dbReference>
<dbReference type="Reactome" id="R-HSA-9830674">
    <property type="pathway name" value="Formation of the ureteric bud"/>
</dbReference>
<dbReference type="SignaLink" id="P56159"/>
<dbReference type="SIGNOR" id="P56159"/>
<dbReference type="BioGRID-ORCS" id="2674">
    <property type="hits" value="13 hits in 1150 CRISPR screens"/>
</dbReference>
<dbReference type="ChiTaRS" id="GFRA1">
    <property type="organism name" value="human"/>
</dbReference>
<dbReference type="GeneWiki" id="GDNF_family_receptor_alpha_1"/>
<dbReference type="GenomeRNAi" id="2674"/>
<dbReference type="Pharos" id="P56159">
    <property type="development level" value="Tbio"/>
</dbReference>
<dbReference type="PRO" id="PR:P56159"/>
<dbReference type="Proteomes" id="UP000005640">
    <property type="component" value="Chromosome 10"/>
</dbReference>
<dbReference type="RNAct" id="P56159">
    <property type="molecule type" value="protein"/>
</dbReference>
<dbReference type="Bgee" id="ENSG00000151892">
    <property type="expression patterns" value="Expressed in endometrium epithelium and 155 other cell types or tissues"/>
</dbReference>
<dbReference type="GO" id="GO:0030424">
    <property type="term" value="C:axon"/>
    <property type="evidence" value="ECO:0007669"/>
    <property type="project" value="Ensembl"/>
</dbReference>
<dbReference type="GO" id="GO:0009897">
    <property type="term" value="C:external side of plasma membrane"/>
    <property type="evidence" value="ECO:0000318"/>
    <property type="project" value="GO_Central"/>
</dbReference>
<dbReference type="GO" id="GO:0070062">
    <property type="term" value="C:extracellular exosome"/>
    <property type="evidence" value="ECO:0007005"/>
    <property type="project" value="UniProtKB"/>
</dbReference>
<dbReference type="GO" id="GO:0019898">
    <property type="term" value="C:extrinsic component of membrane"/>
    <property type="evidence" value="ECO:0000304"/>
    <property type="project" value="ProtInc"/>
</dbReference>
<dbReference type="GO" id="GO:0005794">
    <property type="term" value="C:Golgi apparatus"/>
    <property type="evidence" value="ECO:0007669"/>
    <property type="project" value="UniProtKB-SubCell"/>
</dbReference>
<dbReference type="GO" id="GO:0005771">
    <property type="term" value="C:multivesicular body"/>
    <property type="evidence" value="ECO:0007669"/>
    <property type="project" value="UniProtKB-SubCell"/>
</dbReference>
<dbReference type="GO" id="GO:0043025">
    <property type="term" value="C:neuronal cell body"/>
    <property type="evidence" value="ECO:0007669"/>
    <property type="project" value="Ensembl"/>
</dbReference>
<dbReference type="GO" id="GO:0005886">
    <property type="term" value="C:plasma membrane"/>
    <property type="evidence" value="ECO:0000250"/>
    <property type="project" value="UniProt"/>
</dbReference>
<dbReference type="GO" id="GO:0098797">
    <property type="term" value="C:plasma membrane protein complex"/>
    <property type="evidence" value="ECO:0007669"/>
    <property type="project" value="Ensembl"/>
</dbReference>
<dbReference type="GO" id="GO:0043235">
    <property type="term" value="C:receptor complex"/>
    <property type="evidence" value="ECO:0000318"/>
    <property type="project" value="GO_Central"/>
</dbReference>
<dbReference type="GO" id="GO:0016167">
    <property type="term" value="F:glial cell-derived neurotrophic factor receptor activity"/>
    <property type="evidence" value="ECO:0000314"/>
    <property type="project" value="UniProtKB"/>
</dbReference>
<dbReference type="GO" id="GO:0005178">
    <property type="term" value="F:integrin binding"/>
    <property type="evidence" value="ECO:0007669"/>
    <property type="project" value="Ensembl"/>
</dbReference>
<dbReference type="GO" id="GO:0005030">
    <property type="term" value="F:neurotrophin receptor activity"/>
    <property type="evidence" value="ECO:0007669"/>
    <property type="project" value="Ensembl"/>
</dbReference>
<dbReference type="GO" id="GO:0038023">
    <property type="term" value="F:signaling receptor activity"/>
    <property type="evidence" value="ECO:0000318"/>
    <property type="project" value="GO_Central"/>
</dbReference>
<dbReference type="GO" id="GO:0005102">
    <property type="term" value="F:signaling receptor binding"/>
    <property type="evidence" value="ECO:0000304"/>
    <property type="project" value="ProtInc"/>
</dbReference>
<dbReference type="GO" id="GO:0016477">
    <property type="term" value="P:cell migration"/>
    <property type="evidence" value="ECO:0007669"/>
    <property type="project" value="Ensembl"/>
</dbReference>
<dbReference type="GO" id="GO:0007166">
    <property type="term" value="P:cell surface receptor signaling pathway"/>
    <property type="evidence" value="ECO:0000303"/>
    <property type="project" value="UniProtKB"/>
</dbReference>
<dbReference type="GO" id="GO:0035860">
    <property type="term" value="P:glial cell-derived neurotrophic factor receptor signaling pathway"/>
    <property type="evidence" value="ECO:0000314"/>
    <property type="project" value="UniProtKB"/>
</dbReference>
<dbReference type="GO" id="GO:0001822">
    <property type="term" value="P:kidney development"/>
    <property type="evidence" value="ECO:0007669"/>
    <property type="project" value="Ensembl"/>
</dbReference>
<dbReference type="GO" id="GO:0008584">
    <property type="term" value="P:male gonad development"/>
    <property type="evidence" value="ECO:0007669"/>
    <property type="project" value="Ensembl"/>
</dbReference>
<dbReference type="GO" id="GO:0007399">
    <property type="term" value="P:nervous system development"/>
    <property type="evidence" value="ECO:0000318"/>
    <property type="project" value="GO_Central"/>
</dbReference>
<dbReference type="GO" id="GO:0031175">
    <property type="term" value="P:neuron projection development"/>
    <property type="evidence" value="ECO:0007669"/>
    <property type="project" value="Ensembl"/>
</dbReference>
<dbReference type="FunFam" id="1.10.220.110:FF:000001">
    <property type="entry name" value="GDNF family receptor alpha"/>
    <property type="match status" value="1"/>
</dbReference>
<dbReference type="Gene3D" id="1.10.220.110">
    <property type="entry name" value="GDNF binding domain"/>
    <property type="match status" value="1"/>
</dbReference>
<dbReference type="InterPro" id="IPR016017">
    <property type="entry name" value="GDNF/GAS1"/>
</dbReference>
<dbReference type="InterPro" id="IPR037193">
    <property type="entry name" value="GDNF_alpha"/>
</dbReference>
<dbReference type="InterPro" id="IPR003438">
    <property type="entry name" value="GDNF_rcpt"/>
</dbReference>
<dbReference type="InterPro" id="IPR003503">
    <property type="entry name" value="GDNF_rcpt_A1"/>
</dbReference>
<dbReference type="InterPro" id="IPR017372">
    <property type="entry name" value="Glial_neurotroph_fac_rcpt_a1/2"/>
</dbReference>
<dbReference type="PANTHER" id="PTHR10269:SF3">
    <property type="entry name" value="GDNF FAMILY RECEPTOR ALPHA-1"/>
    <property type="match status" value="1"/>
</dbReference>
<dbReference type="PANTHER" id="PTHR10269">
    <property type="entry name" value="GDNF RECEPTOR ALPHA"/>
    <property type="match status" value="1"/>
</dbReference>
<dbReference type="Pfam" id="PF02351">
    <property type="entry name" value="GDNF"/>
    <property type="match status" value="3"/>
</dbReference>
<dbReference type="PIRSF" id="PIRSF038071">
    <property type="entry name" value="GDNF_family_receptor_alpha"/>
    <property type="match status" value="1"/>
</dbReference>
<dbReference type="PRINTS" id="PR01317">
    <property type="entry name" value="GDNFRALPHA1"/>
</dbReference>
<dbReference type="PRINTS" id="PR01316">
    <property type="entry name" value="GDNFRECEPTOR"/>
</dbReference>
<dbReference type="SMART" id="SM00907">
    <property type="entry name" value="GDNF"/>
    <property type="match status" value="3"/>
</dbReference>
<dbReference type="SUPFAM" id="SSF110035">
    <property type="entry name" value="GDNF receptor-like"/>
    <property type="match status" value="1"/>
</dbReference>
<accession>P56159</accession>
<accession>A8KA21</accession>
<accession>O15507</accession>
<accession>O43912</accession>
<gene>
    <name type="primary">GFRA1</name>
    <name type="synonym">GDNFRA</name>
    <name type="synonym">RETL1</name>
    <name type="synonym">TRNR1</name>
</gene>
<organism>
    <name type="scientific">Homo sapiens</name>
    <name type="common">Human</name>
    <dbReference type="NCBI Taxonomy" id="9606"/>
    <lineage>
        <taxon>Eukaryota</taxon>
        <taxon>Metazoa</taxon>
        <taxon>Chordata</taxon>
        <taxon>Craniata</taxon>
        <taxon>Vertebrata</taxon>
        <taxon>Euteleostomi</taxon>
        <taxon>Mammalia</taxon>
        <taxon>Eutheria</taxon>
        <taxon>Euarchontoglires</taxon>
        <taxon>Primates</taxon>
        <taxon>Haplorrhini</taxon>
        <taxon>Catarrhini</taxon>
        <taxon>Hominidae</taxon>
        <taxon>Homo</taxon>
    </lineage>
</organism>
<keyword id="KW-0002">3D-structure</keyword>
<keyword id="KW-0025">Alternative splicing</keyword>
<keyword id="KW-1003">Cell membrane</keyword>
<keyword id="KW-0225">Disease variant</keyword>
<keyword id="KW-1015">Disulfide bond</keyword>
<keyword id="KW-0967">Endosome</keyword>
<keyword id="KW-0325">Glycoprotein</keyword>
<keyword id="KW-0333">Golgi apparatus</keyword>
<keyword id="KW-0336">GPI-anchor</keyword>
<keyword id="KW-0449">Lipoprotein</keyword>
<keyword id="KW-0472">Membrane</keyword>
<keyword id="KW-1267">Proteomics identification</keyword>
<keyword id="KW-0675">Receptor</keyword>
<keyword id="KW-1185">Reference proteome</keyword>
<keyword id="KW-0677">Repeat</keyword>
<keyword id="KW-0732">Signal</keyword>
<sequence length="465" mass="51456">MFLATLYFALPLLDLLLSAEVSGGDRLDCVKASDQCLKEQSCSTKYRTLRQCVAGKETNFSLASGLEAKDECRSAMEALKQKSLYNCRCKRGMKKEKNCLRIYWSMYQSLQGNDLLEDSPYEPVNSRLSDIFRVVPFISDVFQQVEHIPKGNNCLDAAKACNLDDICKKYRSAYITPCTTSVSNDVCNRRKCHKALRQFFDKVPAKHSYGMLFCSCRDIACTERRRQTIVPVCSYEEREKPNCLNLQDSCKTNYICRSRLADFFTNCQPESRSVSSCLKENYADCLLAYSGLIGTVMTPNYIDSSSLSVAPWCDCSNSGNDLEECLKFLNFFKDNTCLKNAIQAFGNGSDVTVWQPAFPVQTTTATTTTALRVKNKPLGPAGSENEIPTHVLPPCANLQAQKLKSNVSGNTHLCISNGNYEKEGLGASSHITTKSMAAPPSCGLSPLLVLVVTALSTLLSLTETS</sequence>
<feature type="signal peptide" evidence="2">
    <location>
        <begin position="1"/>
        <end position="24"/>
    </location>
</feature>
<feature type="chain" id="PRO_0000010777" description="GDNF family receptor alpha-1">
    <location>
        <begin position="25"/>
        <end position="429"/>
    </location>
</feature>
<feature type="propeptide" id="PRO_0000010778" description="Removed in mature form" evidence="2">
    <location>
        <begin position="430"/>
        <end position="465"/>
    </location>
</feature>
<feature type="repeat" description="1">
    <location>
        <begin position="25"/>
        <end position="113"/>
    </location>
</feature>
<feature type="repeat" description="2">
    <location>
        <begin position="150"/>
        <end position="238"/>
    </location>
</feature>
<feature type="repeat" description="3">
    <location>
        <begin position="239"/>
        <end position="342"/>
    </location>
</feature>
<feature type="lipid moiety-binding region" description="GPI-anchor amidated serine" evidence="2">
    <location>
        <position position="429"/>
    </location>
</feature>
<feature type="glycosylation site" description="N-linked (GlcNAc...) asparagine" evidence="2">
    <location>
        <position position="59"/>
    </location>
</feature>
<feature type="glycosylation site" description="N-linked (GlcNAc...) asparagine" evidence="2">
    <location>
        <position position="347"/>
    </location>
</feature>
<feature type="glycosylation site" description="N-linked (GlcNAc...) asparagine" evidence="2">
    <location>
        <position position="406"/>
    </location>
</feature>
<feature type="disulfide bond" evidence="1">
    <location>
        <begin position="36"/>
        <end position="42"/>
    </location>
</feature>
<feature type="disulfide bond" evidence="6 15">
    <location>
        <begin position="154"/>
        <end position="214"/>
    </location>
</feature>
<feature type="disulfide bond" evidence="6 15">
    <location>
        <begin position="161"/>
        <end position="167"/>
    </location>
</feature>
<feature type="disulfide bond" evidence="6 15">
    <location>
        <begin position="178"/>
        <end position="192"/>
    </location>
</feature>
<feature type="disulfide bond" evidence="6 15">
    <location>
        <begin position="187"/>
        <end position="233"/>
    </location>
</feature>
<feature type="disulfide bond" evidence="6 15">
    <location>
        <begin position="216"/>
        <end position="221"/>
    </location>
</feature>
<feature type="disulfide bond" evidence="6 15">
    <location>
        <begin position="243"/>
        <end position="313"/>
    </location>
</feature>
<feature type="disulfide bond" evidence="6 15">
    <location>
        <begin position="250"/>
        <end position="256"/>
    </location>
</feature>
<feature type="disulfide bond" evidence="6 15">
    <location>
        <begin position="267"/>
        <end position="285"/>
    </location>
</feature>
<feature type="disulfide bond" evidence="6 15">
    <location>
        <begin position="277"/>
        <end position="337"/>
    </location>
</feature>
<feature type="disulfide bond" evidence="6 15">
    <location>
        <begin position="315"/>
        <end position="325"/>
    </location>
</feature>
<feature type="splice variant" id="VSP_001660" description="In isoform 2." evidence="10 11 12 13">
    <location>
        <begin position="140"/>
        <end position="144"/>
    </location>
</feature>
<feature type="sequence variant" id="VAR_012488" description="In dbSNP:rs8192662." evidence="9">
    <original>Y</original>
    <variation>N</variation>
    <location>
        <position position="85"/>
    </location>
</feature>
<feature type="sequence variant" id="VAR_087454" description="In RHDA4." evidence="8">
    <location>
        <begin position="210"/>
        <end position="465"/>
    </location>
</feature>
<feature type="sequence variant" id="VAR_087455" description="In RHDA4." evidence="7">
    <location>
        <begin position="226"/>
        <end position="465"/>
    </location>
</feature>
<feature type="sequence variant" id="VAR_012489" description="In dbSNP:rs2072276." evidence="4 9">
    <original>T</original>
    <variation>A</variation>
    <location>
        <position position="366"/>
    </location>
</feature>
<feature type="sequence variant" id="VAR_018261" description="May be involved in congenital central hypoventilation syndrome; dbSNP:rs924541616." evidence="4">
    <original>L</original>
    <variation>R</variation>
    <location>
        <position position="371"/>
    </location>
</feature>
<feature type="sequence conflict" description="In Ref. 1; no nucleotide entry." evidence="14" ref="1">
    <location>
        <position position="245"/>
    </location>
</feature>
<feature type="sequence conflict" description="In Ref. 1; no nucleotide entry." evidence="14" ref="1">
    <original>F</original>
    <variation>P</variation>
    <location>
        <position position="358"/>
    </location>
</feature>
<name>GFRA1_HUMAN</name>
<protein>
    <recommendedName>
        <fullName>GDNF family receptor alpha-1</fullName>
        <shortName>GDNF receptor alpha-1</shortName>
        <shortName>GDNFR-alpha-1</shortName>
        <shortName>GFR-alpha-1</shortName>
    </recommendedName>
    <alternativeName>
        <fullName>RET ligand 1</fullName>
    </alternativeName>
    <alternativeName>
        <fullName>TGF-beta-related neurotrophic factor receptor 1</fullName>
    </alternativeName>
</protein>
<reference key="1">
    <citation type="journal article" date="1996" name="Cell">
        <title>GDNF-induced activation of the ret protein tyrosine kinase is mediated by GDNFR-alpha, a novel receptor for GDNF.</title>
        <authorList>
            <person name="Jing S."/>
            <person name="Wen D."/>
            <person name="Yu Y."/>
            <person name="Holst P.L."/>
            <person name="Luo Y."/>
            <person name="Fang M."/>
            <person name="Tamir R."/>
            <person name="Antonio L."/>
            <person name="Hu Z."/>
            <person name="Cupples R."/>
            <person name="Louis J.-C."/>
            <person name="Hu S."/>
            <person name="Altrock B.W."/>
            <person name="Fox G.M."/>
        </authorList>
    </citation>
    <scope>NUCLEOTIDE SEQUENCE (ISOFORM 1)</scope>
    <source>
        <tissue>Substantia nigra</tissue>
    </source>
</reference>
<reference key="2">
    <citation type="journal article" date="1997" name="Proc. Natl. Acad. Sci. U.S.A.">
        <title>Glial cell line-derived neurotrophic factor-dependent RET activation can be mediated by two different cell-surface accessory proteins.</title>
        <authorList>
            <person name="Sanicola M."/>
            <person name="Hession C.A."/>
            <person name="Worley D.S."/>
            <person name="Carmillo P."/>
            <person name="Ehrenfels C."/>
            <person name="Walus L."/>
            <person name="Robinson S."/>
            <person name="Jaworski G."/>
            <person name="Wei H."/>
            <person name="Tizard R."/>
            <person name="Whitty A."/>
            <person name="Pepinsky R.B."/>
            <person name="Cate R.L."/>
        </authorList>
    </citation>
    <scope>NUCLEOTIDE SEQUENCE [MRNA] (ISOFORM 2)</scope>
    <source>
        <tissue>Kidney</tissue>
    </source>
</reference>
<reference key="3">
    <citation type="journal article" date="1998" name="Genomics">
        <title>Human GFRA1: cloning, mapping, genomic structure, and evaluation as a candidate gene for Hirschsprung disease susceptibility.</title>
        <authorList>
            <person name="Angrist M."/>
            <person name="Jing S."/>
            <person name="Bolk S."/>
            <person name="Bentley K."/>
            <person name="Nallasamy S."/>
            <person name="Halushka M."/>
            <person name="Fox G.M."/>
            <person name="Chakravarti A."/>
        </authorList>
    </citation>
    <scope>NUCLEOTIDE SEQUENCE [GENOMIC DNA / MRNA] (ISOFORM 1)</scope>
    <scope>VARIANTS ASN-85 AND ALA-366</scope>
</reference>
<reference key="4">
    <citation type="journal article" date="1998" name="Hum. Genet.">
        <title>Mutational analysis of the GDNF/RET-GDNFR-alpha signaling complex in a kindred with vesicoureteral reflux.</title>
        <authorList>
            <person name="Shefelbine S.E."/>
            <person name="Khorana S."/>
            <person name="Schultz P.N."/>
            <person name="Huang E."/>
            <person name="Thobe N."/>
            <person name="Hu Z.J."/>
            <person name="Fox G.M."/>
            <person name="Jing S."/>
            <person name="Cote G.J."/>
            <person name="Gagel R.F."/>
        </authorList>
    </citation>
    <scope>NUCLEOTIDE SEQUENCE [MRNA] (ISOFORM 1)</scope>
    <source>
        <tissue>Thyroid carcinoma</tissue>
    </source>
</reference>
<reference key="5">
    <citation type="submission" date="1997-10" db="EMBL/GenBank/DDBJ databases">
        <title>GDNF-induced differentiation and its enhancement by retinoic acid in primary human neuroblastomas expressing c-Ret and GDNFR-alpha.</title>
        <authorList>
            <person name="Hishiki T."/>
            <person name="Kondoh K."/>
            <person name="Ichimiya S."/>
            <person name="Nimura Y."/>
            <person name="Seki N."/>
            <person name="Ozaki T."/>
            <person name="Sakiyama S."/>
            <person name="Takahashi H."/>
            <person name="Ohnuma N."/>
            <person name="Tanabe M."/>
            <person name="Fujimura S."/>
            <person name="Nakagawara A."/>
        </authorList>
    </citation>
    <scope>NUCLEOTIDE SEQUENCE [MRNA] (ISOFORM 2)</scope>
    <source>
        <tissue>Substantia nigra</tissue>
    </source>
</reference>
<reference key="6">
    <citation type="journal article" date="2004" name="Nat. Genet.">
        <title>Complete sequencing and characterization of 21,243 full-length human cDNAs.</title>
        <authorList>
            <person name="Ota T."/>
            <person name="Suzuki Y."/>
            <person name="Nishikawa T."/>
            <person name="Otsuki T."/>
            <person name="Sugiyama T."/>
            <person name="Irie R."/>
            <person name="Wakamatsu A."/>
            <person name="Hayashi K."/>
            <person name="Sato H."/>
            <person name="Nagai K."/>
            <person name="Kimura K."/>
            <person name="Makita H."/>
            <person name="Sekine M."/>
            <person name="Obayashi M."/>
            <person name="Nishi T."/>
            <person name="Shibahara T."/>
            <person name="Tanaka T."/>
            <person name="Ishii S."/>
            <person name="Yamamoto J."/>
            <person name="Saito K."/>
            <person name="Kawai Y."/>
            <person name="Isono Y."/>
            <person name="Nakamura Y."/>
            <person name="Nagahari K."/>
            <person name="Murakami K."/>
            <person name="Yasuda T."/>
            <person name="Iwayanagi T."/>
            <person name="Wagatsuma M."/>
            <person name="Shiratori A."/>
            <person name="Sudo H."/>
            <person name="Hosoiri T."/>
            <person name="Kaku Y."/>
            <person name="Kodaira H."/>
            <person name="Kondo H."/>
            <person name="Sugawara M."/>
            <person name="Takahashi M."/>
            <person name="Kanda K."/>
            <person name="Yokoi T."/>
            <person name="Furuya T."/>
            <person name="Kikkawa E."/>
            <person name="Omura Y."/>
            <person name="Abe K."/>
            <person name="Kamihara K."/>
            <person name="Katsuta N."/>
            <person name="Sato K."/>
            <person name="Tanikawa M."/>
            <person name="Yamazaki M."/>
            <person name="Ninomiya K."/>
            <person name="Ishibashi T."/>
            <person name="Yamashita H."/>
            <person name="Murakawa K."/>
            <person name="Fujimori K."/>
            <person name="Tanai H."/>
            <person name="Kimata M."/>
            <person name="Watanabe M."/>
            <person name="Hiraoka S."/>
            <person name="Chiba Y."/>
            <person name="Ishida S."/>
            <person name="Ono Y."/>
            <person name="Takiguchi S."/>
            <person name="Watanabe S."/>
            <person name="Yosida M."/>
            <person name="Hotuta T."/>
            <person name="Kusano J."/>
            <person name="Kanehori K."/>
            <person name="Takahashi-Fujii A."/>
            <person name="Hara H."/>
            <person name="Tanase T.-O."/>
            <person name="Nomura Y."/>
            <person name="Togiya S."/>
            <person name="Komai F."/>
            <person name="Hara R."/>
            <person name="Takeuchi K."/>
            <person name="Arita M."/>
            <person name="Imose N."/>
            <person name="Musashino K."/>
            <person name="Yuuki H."/>
            <person name="Oshima A."/>
            <person name="Sasaki N."/>
            <person name="Aotsuka S."/>
            <person name="Yoshikawa Y."/>
            <person name="Matsunawa H."/>
            <person name="Ichihara T."/>
            <person name="Shiohata N."/>
            <person name="Sano S."/>
            <person name="Moriya S."/>
            <person name="Momiyama H."/>
            <person name="Satoh N."/>
            <person name="Takami S."/>
            <person name="Terashima Y."/>
            <person name="Suzuki O."/>
            <person name="Nakagawa S."/>
            <person name="Senoh A."/>
            <person name="Mizoguchi H."/>
            <person name="Goto Y."/>
            <person name="Shimizu F."/>
            <person name="Wakebe H."/>
            <person name="Hishigaki H."/>
            <person name="Watanabe T."/>
            <person name="Sugiyama A."/>
            <person name="Takemoto M."/>
            <person name="Kawakami B."/>
            <person name="Yamazaki M."/>
            <person name="Watanabe K."/>
            <person name="Kumagai A."/>
            <person name="Itakura S."/>
            <person name="Fukuzumi Y."/>
            <person name="Fujimori Y."/>
            <person name="Komiyama M."/>
            <person name="Tashiro H."/>
            <person name="Tanigami A."/>
            <person name="Fujiwara T."/>
            <person name="Ono T."/>
            <person name="Yamada K."/>
            <person name="Fujii Y."/>
            <person name="Ozaki K."/>
            <person name="Hirao M."/>
            <person name="Ohmori Y."/>
            <person name="Kawabata A."/>
            <person name="Hikiji T."/>
            <person name="Kobatake N."/>
            <person name="Inagaki H."/>
            <person name="Ikema Y."/>
            <person name="Okamoto S."/>
            <person name="Okitani R."/>
            <person name="Kawakami T."/>
            <person name="Noguchi S."/>
            <person name="Itoh T."/>
            <person name="Shigeta K."/>
            <person name="Senba T."/>
            <person name="Matsumura K."/>
            <person name="Nakajima Y."/>
            <person name="Mizuno T."/>
            <person name="Morinaga M."/>
            <person name="Sasaki M."/>
            <person name="Togashi T."/>
            <person name="Oyama M."/>
            <person name="Hata H."/>
            <person name="Watanabe M."/>
            <person name="Komatsu T."/>
            <person name="Mizushima-Sugano J."/>
            <person name="Satoh T."/>
            <person name="Shirai Y."/>
            <person name="Takahashi Y."/>
            <person name="Nakagawa K."/>
            <person name="Okumura K."/>
            <person name="Nagase T."/>
            <person name="Nomura N."/>
            <person name="Kikuchi H."/>
            <person name="Masuho Y."/>
            <person name="Yamashita R."/>
            <person name="Nakai K."/>
            <person name="Yada T."/>
            <person name="Nakamura Y."/>
            <person name="Ohara O."/>
            <person name="Isogai T."/>
            <person name="Sugano S."/>
        </authorList>
    </citation>
    <scope>NUCLEOTIDE SEQUENCE [LARGE SCALE MRNA] (ISOFORM 2)</scope>
    <source>
        <tissue>Trachea</tissue>
    </source>
</reference>
<reference key="7">
    <citation type="submission" date="2005-09" db="EMBL/GenBank/DDBJ databases">
        <authorList>
            <person name="Mural R.J."/>
            <person name="Istrail S."/>
            <person name="Sutton G.G."/>
            <person name="Florea L."/>
            <person name="Halpern A.L."/>
            <person name="Mobarry C.M."/>
            <person name="Lippert R."/>
            <person name="Walenz B."/>
            <person name="Shatkay H."/>
            <person name="Dew I."/>
            <person name="Miller J.R."/>
            <person name="Flanigan M.J."/>
            <person name="Edwards N.J."/>
            <person name="Bolanos R."/>
            <person name="Fasulo D."/>
            <person name="Halldorsson B.V."/>
            <person name="Hannenhalli S."/>
            <person name="Turner R."/>
            <person name="Yooseph S."/>
            <person name="Lu F."/>
            <person name="Nusskern D.R."/>
            <person name="Shue B.C."/>
            <person name="Zheng X.H."/>
            <person name="Zhong F."/>
            <person name="Delcher A.L."/>
            <person name="Huson D.H."/>
            <person name="Kravitz S.A."/>
            <person name="Mouchard L."/>
            <person name="Reinert K."/>
            <person name="Remington K.A."/>
            <person name="Clark A.G."/>
            <person name="Waterman M.S."/>
            <person name="Eichler E.E."/>
            <person name="Adams M.D."/>
            <person name="Hunkapiller M.W."/>
            <person name="Myers E.W."/>
            <person name="Venter J.C."/>
        </authorList>
    </citation>
    <scope>NUCLEOTIDE SEQUENCE [LARGE SCALE GENOMIC DNA]</scope>
</reference>
<reference key="8">
    <citation type="journal article" date="2004" name="Genome Res.">
        <title>The status, quality, and expansion of the NIH full-length cDNA project: the Mammalian Gene Collection (MGC).</title>
        <authorList>
            <consortium name="The MGC Project Team"/>
        </authorList>
    </citation>
    <scope>NUCLEOTIDE SEQUENCE [LARGE SCALE MRNA] (ISOFORM 2)</scope>
    <source>
        <tissue>Eye</tissue>
    </source>
</reference>
<reference key="9">
    <citation type="journal article" date="2000" name="J. Biol. Chem.">
        <title>Binding of GDNF and neurturin to human GDNF family receptor alpha 1 and 2. Influence of cRET and cooperative interactions.</title>
        <authorList>
            <person name="Cik M."/>
            <person name="Masure S."/>
            <person name="Lesage A.S."/>
            <person name="Van Der Linden I."/>
            <person name="Van Gompel P."/>
            <person name="Pangalos M.N."/>
            <person name="Gordon R.D."/>
            <person name="Leysen J.E."/>
        </authorList>
    </citation>
    <scope>FUNCTION</scope>
</reference>
<reference key="10">
    <citation type="journal article" date="2004" name="Genome Biol.">
        <title>An unappreciated role for RNA surveillance.</title>
        <authorList>
            <person name="Hillman R.T."/>
            <person name="Green R.E."/>
            <person name="Brenner S.E."/>
        </authorList>
    </citation>
    <scope>SPLICE ISOFORM(S) THAT ARE POTENTIAL NMD TARGET(S)</scope>
</reference>
<reference key="11">
    <citation type="journal article" date="2013" name="Cell Rep.">
        <title>SorLA controls neurotrophic activity by sorting of GDNF and its receptors GFRalpha1 and RET.</title>
        <authorList>
            <person name="Glerup S."/>
            <person name="Lume M."/>
            <person name="Olsen D."/>
            <person name="Nyengaard J.R."/>
            <person name="Vaegter C.B."/>
            <person name="Gustafsen C."/>
            <person name="Christensen E.I."/>
            <person name="Kjolby M."/>
            <person name="Hay-Schmidt A."/>
            <person name="Bender D."/>
            <person name="Madsen P."/>
            <person name="Saarma M."/>
            <person name="Nykjaer A."/>
            <person name="Petersen C.M."/>
        </authorList>
    </citation>
    <scope>INTERACTION WITH RET AND SORL1</scope>
</reference>
<reference evidence="15" key="12">
    <citation type="journal article" date="2019" name="Elife">
        <title>Cryo-EM analyses reveal the common mechanism and diversification in the activation of RET by different ligands.</title>
        <authorList>
            <person name="Li J."/>
            <person name="Shang G."/>
            <person name="Chen Y.J."/>
            <person name="Brautigam C.A."/>
            <person name="Liou J."/>
            <person name="Zhang X."/>
            <person name="Bai X.C."/>
        </authorList>
    </citation>
    <scope>STRUCTURE BY ELECTRON MICROSCOPY (4.40 ANGSTROMS) OF 25-426 IN COMPLEX WITH RET AND GDNF</scope>
    <scope>FUNCTION</scope>
    <scope>DISULFIDE BONDS</scope>
    <scope>SUBUNIT</scope>
</reference>
<reference key="13">
    <citation type="journal article" date="2021" name="J. Am. Soc. Nephrol.">
        <title>Biallelic Pathogenic GFRA1 Variants Cause Autosomal Recessive Bilateral Renal Agenesis.</title>
        <authorList>
            <person name="Arora V."/>
            <person name="Khan S."/>
            <person name="El-Hattab A.W."/>
            <person name="Dua Puri R."/>
            <person name="Rocha M.E."/>
            <person name="Merdzanic R."/>
            <person name="Paknia O."/>
            <person name="Beetz C."/>
            <person name="Rolfs A."/>
            <person name="Bertoli-Avella A.M."/>
            <person name="Bauer P."/>
            <person name="Verma I.C."/>
        </authorList>
    </citation>
    <scope>INVOLVEMENT IN RHDA4</scope>
    <scope>VARIANT RHDA4 226-ARG--SER-465 DEL</scope>
</reference>
<reference key="14">
    <citation type="journal article" date="2003" name="Hum. Genet.">
        <title>Molecular analysis of congenital central hypoventilation syndrome.</title>
        <authorList>
            <person name="Sasaki A."/>
            <person name="Kanai M."/>
            <person name="Kijima K."/>
            <person name="Akaba K."/>
            <person name="Hashimoto M."/>
            <person name="Hasegawa H."/>
            <person name="Otaki S."/>
            <person name="Koizumi T."/>
            <person name="Kusuda S."/>
            <person name="Ogawa Y."/>
            <person name="Tuchiya K."/>
            <person name="Yamamoto W."/>
            <person name="Nakamura T."/>
            <person name="Hayasaka K."/>
        </authorList>
    </citation>
    <scope>VARIANTS ALA-366 AND ARG-371</scope>
</reference>
<reference key="15">
    <citation type="journal article" date="2022" name="Eur. J. Med. Genet.">
        <title>Biallelic loss-of-function variants of GFRA1 cause lethal bilateral renal agenesis.</title>
        <authorList>
            <person name="Al-Shamsi B."/>
            <person name="Al-Kasbi G."/>
            <person name="Al-Kindi A."/>
            <person name="Bruwer Z."/>
            <person name="Al-Kharusi K."/>
            <person name="Al-Maawali A."/>
        </authorList>
    </citation>
    <scope>VARIANT RHDA4 210-GLY--SER-465 DEL</scope>
</reference>
<proteinExistence type="evidence at protein level"/>
<evidence type="ECO:0000250" key="1">
    <source>
        <dbReference type="UniProtKB" id="Q62997"/>
    </source>
</evidence>
<evidence type="ECO:0000255" key="2"/>
<evidence type="ECO:0000269" key="3">
    <source>
    </source>
</evidence>
<evidence type="ECO:0000269" key="4">
    <source>
    </source>
</evidence>
<evidence type="ECO:0000269" key="5">
    <source>
    </source>
</evidence>
<evidence type="ECO:0000269" key="6">
    <source>
    </source>
</evidence>
<evidence type="ECO:0000269" key="7">
    <source>
    </source>
</evidence>
<evidence type="ECO:0000269" key="8">
    <source>
    </source>
</evidence>
<evidence type="ECO:0000269" key="9">
    <source>
    </source>
</evidence>
<evidence type="ECO:0000303" key="10">
    <source>
    </source>
</evidence>
<evidence type="ECO:0000303" key="11">
    <source>
    </source>
</evidence>
<evidence type="ECO:0000303" key="12">
    <source>
    </source>
</evidence>
<evidence type="ECO:0000303" key="13">
    <source ref="5"/>
</evidence>
<evidence type="ECO:0000305" key="14"/>
<evidence type="ECO:0007744" key="15">
    <source>
        <dbReference type="PDB" id="6Q2N"/>
    </source>
</evidence>